<comment type="similarity">
    <text evidence="1">Belongs to the bacterial ribosomal protein bL34 family.</text>
</comment>
<dbReference type="EMBL" id="AE001439">
    <property type="protein sequence ID" value="AAD06928.1"/>
    <property type="molecule type" value="Genomic_DNA"/>
</dbReference>
<dbReference type="RefSeq" id="WP_001847286.1">
    <property type="nucleotide sequence ID" value="NZ_CP011330.1"/>
</dbReference>
<dbReference type="SMR" id="P66247"/>
<dbReference type="GeneID" id="93236353"/>
<dbReference type="KEGG" id="hpj:jhp_1340"/>
<dbReference type="PATRIC" id="fig|85963.30.peg.1213"/>
<dbReference type="eggNOG" id="COG0230">
    <property type="taxonomic scope" value="Bacteria"/>
</dbReference>
<dbReference type="Proteomes" id="UP000000804">
    <property type="component" value="Chromosome"/>
</dbReference>
<dbReference type="GO" id="GO:1990904">
    <property type="term" value="C:ribonucleoprotein complex"/>
    <property type="evidence" value="ECO:0007669"/>
    <property type="project" value="UniProtKB-KW"/>
</dbReference>
<dbReference type="GO" id="GO:0005840">
    <property type="term" value="C:ribosome"/>
    <property type="evidence" value="ECO:0007669"/>
    <property type="project" value="UniProtKB-KW"/>
</dbReference>
<dbReference type="GO" id="GO:0003735">
    <property type="term" value="F:structural constituent of ribosome"/>
    <property type="evidence" value="ECO:0007669"/>
    <property type="project" value="InterPro"/>
</dbReference>
<dbReference type="GO" id="GO:0006412">
    <property type="term" value="P:translation"/>
    <property type="evidence" value="ECO:0007669"/>
    <property type="project" value="UniProtKB-UniRule"/>
</dbReference>
<dbReference type="FunFam" id="1.10.287.3980:FF:000001">
    <property type="entry name" value="Mitochondrial ribosomal protein L34"/>
    <property type="match status" value="1"/>
</dbReference>
<dbReference type="Gene3D" id="1.10.287.3980">
    <property type="match status" value="1"/>
</dbReference>
<dbReference type="HAMAP" id="MF_00391">
    <property type="entry name" value="Ribosomal_bL34"/>
    <property type="match status" value="1"/>
</dbReference>
<dbReference type="InterPro" id="IPR000271">
    <property type="entry name" value="Ribosomal_bL34"/>
</dbReference>
<dbReference type="InterPro" id="IPR020939">
    <property type="entry name" value="Ribosomal_bL34_CS"/>
</dbReference>
<dbReference type="NCBIfam" id="TIGR01030">
    <property type="entry name" value="rpmH_bact"/>
    <property type="match status" value="1"/>
</dbReference>
<dbReference type="PANTHER" id="PTHR14503:SF4">
    <property type="entry name" value="LARGE RIBOSOMAL SUBUNIT PROTEIN BL34M"/>
    <property type="match status" value="1"/>
</dbReference>
<dbReference type="PANTHER" id="PTHR14503">
    <property type="entry name" value="MITOCHONDRIAL RIBOSOMAL PROTEIN 34 FAMILY MEMBER"/>
    <property type="match status" value="1"/>
</dbReference>
<dbReference type="Pfam" id="PF00468">
    <property type="entry name" value="Ribosomal_L34"/>
    <property type="match status" value="1"/>
</dbReference>
<dbReference type="PROSITE" id="PS00784">
    <property type="entry name" value="RIBOSOMAL_L34"/>
    <property type="match status" value="1"/>
</dbReference>
<accession>P66247</accession>
<accession>P56056</accession>
<evidence type="ECO:0000305" key="1"/>
<gene>
    <name type="primary">rpmH</name>
    <name type="ordered locus">jhp_1340</name>
</gene>
<proteinExistence type="inferred from homology"/>
<organism>
    <name type="scientific">Helicobacter pylori (strain J99 / ATCC 700824)</name>
    <name type="common">Campylobacter pylori J99</name>
    <dbReference type="NCBI Taxonomy" id="85963"/>
    <lineage>
        <taxon>Bacteria</taxon>
        <taxon>Pseudomonadati</taxon>
        <taxon>Campylobacterota</taxon>
        <taxon>Epsilonproteobacteria</taxon>
        <taxon>Campylobacterales</taxon>
        <taxon>Helicobacteraceae</taxon>
        <taxon>Helicobacter</taxon>
    </lineage>
</organism>
<sequence>MKRTYQPHNTPRKRTHGFLVRMKTKNGRKVINARRAKGRKKLSV</sequence>
<name>RL34_HELPJ</name>
<protein>
    <recommendedName>
        <fullName evidence="1">Large ribosomal subunit protein bL34</fullName>
    </recommendedName>
    <alternativeName>
        <fullName>50S ribosomal protein L34</fullName>
    </alternativeName>
</protein>
<keyword id="KW-0687">Ribonucleoprotein</keyword>
<keyword id="KW-0689">Ribosomal protein</keyword>
<feature type="chain" id="PRO_0000187393" description="Large ribosomal subunit protein bL34">
    <location>
        <begin position="1"/>
        <end position="44"/>
    </location>
</feature>
<reference key="1">
    <citation type="journal article" date="1999" name="Nature">
        <title>Genomic sequence comparison of two unrelated isolates of the human gastric pathogen Helicobacter pylori.</title>
        <authorList>
            <person name="Alm R.A."/>
            <person name="Ling L.-S.L."/>
            <person name="Moir D.T."/>
            <person name="King B.L."/>
            <person name="Brown E.D."/>
            <person name="Doig P.C."/>
            <person name="Smith D.R."/>
            <person name="Noonan B."/>
            <person name="Guild B.C."/>
            <person name="deJonge B.L."/>
            <person name="Carmel G."/>
            <person name="Tummino P.J."/>
            <person name="Caruso A."/>
            <person name="Uria-Nickelsen M."/>
            <person name="Mills D.M."/>
            <person name="Ives C."/>
            <person name="Gibson R."/>
            <person name="Merberg D."/>
            <person name="Mills S.D."/>
            <person name="Jiang Q."/>
            <person name="Taylor D.E."/>
            <person name="Vovis G.F."/>
            <person name="Trust T.J."/>
        </authorList>
    </citation>
    <scope>NUCLEOTIDE SEQUENCE [LARGE SCALE GENOMIC DNA]</scope>
    <source>
        <strain>J99 / ATCC 700824</strain>
    </source>
</reference>